<protein>
    <recommendedName>
        <fullName>Zinc finger protein Gfi-1b</fullName>
    </recommendedName>
    <alternativeName>
        <fullName>Growth factor independent protein 1B</fullName>
    </alternativeName>
</protein>
<sequence>MPRSFLVKSKKAHTYHQPRAQGDELVWPPAVIPVAKEHSQSASPLLSTPLPSQTLDWNTIKQEREMLLNQSLPKMASAPEGPLVTPQPQDGESPLSESPPFYKPSFSWDTLASSYSHSYTQTPSTMQSAFLERSVRLYGSPLVPSTESPLDFRLRYSPGMDTYHCVKCNKVFSTPHGLEVHVRRSHSGTRPFACDVCGKTFGHAVSLEQHTHVHSQERSFECRMCGKAFKRSSTLSTHLLIHSDTRPYPCQFCGKRFHQKSDMKKHTYIHTGEKPHKCQVCGKAFSQSSNLITHSRKHTGFKPFSCELCTKGFQRKVDLRRHRESQHNLK</sequence>
<organism>
    <name type="scientific">Mus musculus</name>
    <name type="common">Mouse</name>
    <dbReference type="NCBI Taxonomy" id="10090"/>
    <lineage>
        <taxon>Eukaryota</taxon>
        <taxon>Metazoa</taxon>
        <taxon>Chordata</taxon>
        <taxon>Craniata</taxon>
        <taxon>Vertebrata</taxon>
        <taxon>Euteleostomi</taxon>
        <taxon>Mammalia</taxon>
        <taxon>Eutheria</taxon>
        <taxon>Euarchontoglires</taxon>
        <taxon>Glires</taxon>
        <taxon>Rodentia</taxon>
        <taxon>Myomorpha</taxon>
        <taxon>Muroidea</taxon>
        <taxon>Muridae</taxon>
        <taxon>Murinae</taxon>
        <taxon>Mus</taxon>
        <taxon>Mus</taxon>
    </lineage>
</organism>
<dbReference type="EMBL" id="AF017275">
    <property type="protein sequence ID" value="AAC40088.1"/>
    <property type="molecule type" value="mRNA"/>
</dbReference>
<dbReference type="EMBL" id="AK157262">
    <property type="protein sequence ID" value="BAE34016.1"/>
    <property type="molecule type" value="mRNA"/>
</dbReference>
<dbReference type="EMBL" id="AL731851">
    <property type="status" value="NOT_ANNOTATED_CDS"/>
    <property type="molecule type" value="Genomic_DNA"/>
</dbReference>
<dbReference type="EMBL" id="BC052654">
    <property type="protein sequence ID" value="AAH52654.1"/>
    <property type="molecule type" value="mRNA"/>
</dbReference>
<dbReference type="EMBL" id="BC132365">
    <property type="protein sequence ID" value="AAI32366.1"/>
    <property type="molecule type" value="mRNA"/>
</dbReference>
<dbReference type="EMBL" id="BC132367">
    <property type="protein sequence ID" value="AAI32368.1"/>
    <property type="molecule type" value="mRNA"/>
</dbReference>
<dbReference type="CCDS" id="CCDS15843.1"/>
<dbReference type="RefSeq" id="NP_032140.1">
    <property type="nucleotide sequence ID" value="NM_008114.4"/>
</dbReference>
<dbReference type="SMR" id="O70237"/>
<dbReference type="BioGRID" id="199901">
    <property type="interactions" value="6"/>
</dbReference>
<dbReference type="CORUM" id="O70237"/>
<dbReference type="FunCoup" id="O70237">
    <property type="interactions" value="329"/>
</dbReference>
<dbReference type="IntAct" id="O70237">
    <property type="interactions" value="11"/>
</dbReference>
<dbReference type="MINT" id="O70237"/>
<dbReference type="STRING" id="10090.ENSMUSP00000128052"/>
<dbReference type="iPTMnet" id="O70237"/>
<dbReference type="PhosphoSitePlus" id="O70237"/>
<dbReference type="PaxDb" id="10090-ENSMUSP00000028156"/>
<dbReference type="ProteomicsDB" id="263352"/>
<dbReference type="Antibodypedia" id="1815">
    <property type="antibodies" value="118 antibodies from 26 providers"/>
</dbReference>
<dbReference type="DNASU" id="14582"/>
<dbReference type="Ensembl" id="ENSMUST00000028156.8">
    <property type="protein sequence ID" value="ENSMUSP00000028156.8"/>
    <property type="gene ID" value="ENSMUSG00000026815.15"/>
</dbReference>
<dbReference type="GeneID" id="14582"/>
<dbReference type="KEGG" id="mmu:14582"/>
<dbReference type="UCSC" id="uc008iyu.2">
    <property type="organism name" value="mouse"/>
</dbReference>
<dbReference type="AGR" id="MGI:1276578"/>
<dbReference type="CTD" id="8328"/>
<dbReference type="MGI" id="MGI:1276578">
    <property type="gene designation" value="Gfi1b"/>
</dbReference>
<dbReference type="VEuPathDB" id="HostDB:ENSMUSG00000026815"/>
<dbReference type="eggNOG" id="KOG1721">
    <property type="taxonomic scope" value="Eukaryota"/>
</dbReference>
<dbReference type="GeneTree" id="ENSGT00940000160010"/>
<dbReference type="HOGENOM" id="CLU_002678_94_9_1"/>
<dbReference type="InParanoid" id="O70237"/>
<dbReference type="OrthoDB" id="6155966at2759"/>
<dbReference type="TreeFam" id="TF350784"/>
<dbReference type="BioGRID-ORCS" id="14582">
    <property type="hits" value="5 hits in 81 CRISPR screens"/>
</dbReference>
<dbReference type="ChiTaRS" id="Gfi1b">
    <property type="organism name" value="mouse"/>
</dbReference>
<dbReference type="PRO" id="PR:O70237"/>
<dbReference type="Proteomes" id="UP000000589">
    <property type="component" value="Chromosome 2"/>
</dbReference>
<dbReference type="RNAct" id="O70237">
    <property type="molecule type" value="protein"/>
</dbReference>
<dbReference type="Bgee" id="ENSMUSG00000026815">
    <property type="expression patterns" value="Expressed in fetal liver hematopoietic progenitor cell and 49 other cell types or tissues"/>
</dbReference>
<dbReference type="ExpressionAtlas" id="O70237">
    <property type="expression patterns" value="baseline and differential"/>
</dbReference>
<dbReference type="GO" id="GO:0005634">
    <property type="term" value="C:nucleus"/>
    <property type="evidence" value="ECO:0007669"/>
    <property type="project" value="UniProtKB-SubCell"/>
</dbReference>
<dbReference type="GO" id="GO:0003677">
    <property type="term" value="F:DNA binding"/>
    <property type="evidence" value="ECO:0007669"/>
    <property type="project" value="UniProtKB-KW"/>
</dbReference>
<dbReference type="GO" id="GO:0008270">
    <property type="term" value="F:zinc ion binding"/>
    <property type="evidence" value="ECO:0007669"/>
    <property type="project" value="UniProtKB-KW"/>
</dbReference>
<dbReference type="GO" id="GO:0030854">
    <property type="term" value="P:positive regulation of granulocyte differentiation"/>
    <property type="evidence" value="ECO:0000314"/>
    <property type="project" value="UniProtKB"/>
</dbReference>
<dbReference type="GO" id="GO:0045646">
    <property type="term" value="P:regulation of erythrocyte differentiation"/>
    <property type="evidence" value="ECO:0000315"/>
    <property type="project" value="UniProtKB"/>
</dbReference>
<dbReference type="FunFam" id="3.30.160.60:FF:000489">
    <property type="entry name" value="Zinc finger protein Gfi-1"/>
    <property type="match status" value="1"/>
</dbReference>
<dbReference type="FunFam" id="3.30.160.60:FF:000827">
    <property type="entry name" value="Zinc finger protein Gfi-1"/>
    <property type="match status" value="1"/>
</dbReference>
<dbReference type="FunFam" id="3.30.160.60:FF:000148">
    <property type="entry name" value="zinc finger protein Gfi-1"/>
    <property type="match status" value="1"/>
</dbReference>
<dbReference type="FunFam" id="3.30.160.60:FF:000245">
    <property type="entry name" value="zinc finger protein Gfi-1"/>
    <property type="match status" value="1"/>
</dbReference>
<dbReference type="FunFam" id="3.30.160.60:FF:000208">
    <property type="entry name" value="zinc finger protein Gfi-1b"/>
    <property type="match status" value="1"/>
</dbReference>
<dbReference type="FunFam" id="3.30.160.60:FF:000432">
    <property type="entry name" value="zinc finger protein Gfi-1b isoform X1"/>
    <property type="match status" value="1"/>
</dbReference>
<dbReference type="Gene3D" id="3.30.160.60">
    <property type="entry name" value="Classic Zinc Finger"/>
    <property type="match status" value="6"/>
</dbReference>
<dbReference type="InterPro" id="IPR050527">
    <property type="entry name" value="Snail/Krueppel_Znf"/>
</dbReference>
<dbReference type="InterPro" id="IPR036236">
    <property type="entry name" value="Znf_C2H2_sf"/>
</dbReference>
<dbReference type="InterPro" id="IPR013087">
    <property type="entry name" value="Znf_C2H2_type"/>
</dbReference>
<dbReference type="PANTHER" id="PTHR24388:SF54">
    <property type="entry name" value="PROTEIN ESCARGOT"/>
    <property type="match status" value="1"/>
</dbReference>
<dbReference type="PANTHER" id="PTHR24388">
    <property type="entry name" value="ZINC FINGER PROTEIN"/>
    <property type="match status" value="1"/>
</dbReference>
<dbReference type="Pfam" id="PF00096">
    <property type="entry name" value="zf-C2H2"/>
    <property type="match status" value="6"/>
</dbReference>
<dbReference type="SMART" id="SM00355">
    <property type="entry name" value="ZnF_C2H2"/>
    <property type="match status" value="6"/>
</dbReference>
<dbReference type="SUPFAM" id="SSF57667">
    <property type="entry name" value="beta-beta-alpha zinc fingers"/>
    <property type="match status" value="3"/>
</dbReference>
<dbReference type="PROSITE" id="PS00028">
    <property type="entry name" value="ZINC_FINGER_C2H2_1"/>
    <property type="match status" value="6"/>
</dbReference>
<dbReference type="PROSITE" id="PS50157">
    <property type="entry name" value="ZINC_FINGER_C2H2_2"/>
    <property type="match status" value="6"/>
</dbReference>
<reference key="1">
    <citation type="journal article" date="1998" name="Mol. Cell. Biol.">
        <title>The Gfi-1B proto-oncoprotein represses p21WAF1 and inhibits myeloid cell differentiation.</title>
        <authorList>
            <person name="Tong B."/>
            <person name="Grimes H.L."/>
            <person name="Yang T.-Y."/>
            <person name="Bear S.E."/>
            <person name="Qin Z."/>
            <person name="Du K."/>
            <person name="El-Deiry W.S."/>
            <person name="Tsichlis P.N."/>
        </authorList>
    </citation>
    <scope>NUCLEOTIDE SEQUENCE [MRNA]</scope>
    <scope>FUNCTION</scope>
    <scope>REGION</scope>
    <scope>TISSUE SPECIFICITY</scope>
    <source>
        <tissue>Bone marrow</tissue>
    </source>
</reference>
<reference key="2">
    <citation type="journal article" date="2005" name="Science">
        <title>The transcriptional landscape of the mammalian genome.</title>
        <authorList>
            <person name="Carninci P."/>
            <person name="Kasukawa T."/>
            <person name="Katayama S."/>
            <person name="Gough J."/>
            <person name="Frith M.C."/>
            <person name="Maeda N."/>
            <person name="Oyama R."/>
            <person name="Ravasi T."/>
            <person name="Lenhard B."/>
            <person name="Wells C."/>
            <person name="Kodzius R."/>
            <person name="Shimokawa K."/>
            <person name="Bajic V.B."/>
            <person name="Brenner S.E."/>
            <person name="Batalov S."/>
            <person name="Forrest A.R."/>
            <person name="Zavolan M."/>
            <person name="Davis M.J."/>
            <person name="Wilming L.G."/>
            <person name="Aidinis V."/>
            <person name="Allen J.E."/>
            <person name="Ambesi-Impiombato A."/>
            <person name="Apweiler R."/>
            <person name="Aturaliya R.N."/>
            <person name="Bailey T.L."/>
            <person name="Bansal M."/>
            <person name="Baxter L."/>
            <person name="Beisel K.W."/>
            <person name="Bersano T."/>
            <person name="Bono H."/>
            <person name="Chalk A.M."/>
            <person name="Chiu K.P."/>
            <person name="Choudhary V."/>
            <person name="Christoffels A."/>
            <person name="Clutterbuck D.R."/>
            <person name="Crowe M.L."/>
            <person name="Dalla E."/>
            <person name="Dalrymple B.P."/>
            <person name="de Bono B."/>
            <person name="Della Gatta G."/>
            <person name="di Bernardo D."/>
            <person name="Down T."/>
            <person name="Engstrom P."/>
            <person name="Fagiolini M."/>
            <person name="Faulkner G."/>
            <person name="Fletcher C.F."/>
            <person name="Fukushima T."/>
            <person name="Furuno M."/>
            <person name="Futaki S."/>
            <person name="Gariboldi M."/>
            <person name="Georgii-Hemming P."/>
            <person name="Gingeras T.R."/>
            <person name="Gojobori T."/>
            <person name="Green R.E."/>
            <person name="Gustincich S."/>
            <person name="Harbers M."/>
            <person name="Hayashi Y."/>
            <person name="Hensch T.K."/>
            <person name="Hirokawa N."/>
            <person name="Hill D."/>
            <person name="Huminiecki L."/>
            <person name="Iacono M."/>
            <person name="Ikeo K."/>
            <person name="Iwama A."/>
            <person name="Ishikawa T."/>
            <person name="Jakt M."/>
            <person name="Kanapin A."/>
            <person name="Katoh M."/>
            <person name="Kawasawa Y."/>
            <person name="Kelso J."/>
            <person name="Kitamura H."/>
            <person name="Kitano H."/>
            <person name="Kollias G."/>
            <person name="Krishnan S.P."/>
            <person name="Kruger A."/>
            <person name="Kummerfeld S.K."/>
            <person name="Kurochkin I.V."/>
            <person name="Lareau L.F."/>
            <person name="Lazarevic D."/>
            <person name="Lipovich L."/>
            <person name="Liu J."/>
            <person name="Liuni S."/>
            <person name="McWilliam S."/>
            <person name="Madan Babu M."/>
            <person name="Madera M."/>
            <person name="Marchionni L."/>
            <person name="Matsuda H."/>
            <person name="Matsuzawa S."/>
            <person name="Miki H."/>
            <person name="Mignone F."/>
            <person name="Miyake S."/>
            <person name="Morris K."/>
            <person name="Mottagui-Tabar S."/>
            <person name="Mulder N."/>
            <person name="Nakano N."/>
            <person name="Nakauchi H."/>
            <person name="Ng P."/>
            <person name="Nilsson R."/>
            <person name="Nishiguchi S."/>
            <person name="Nishikawa S."/>
            <person name="Nori F."/>
            <person name="Ohara O."/>
            <person name="Okazaki Y."/>
            <person name="Orlando V."/>
            <person name="Pang K.C."/>
            <person name="Pavan W.J."/>
            <person name="Pavesi G."/>
            <person name="Pesole G."/>
            <person name="Petrovsky N."/>
            <person name="Piazza S."/>
            <person name="Reed J."/>
            <person name="Reid J.F."/>
            <person name="Ring B.Z."/>
            <person name="Ringwald M."/>
            <person name="Rost B."/>
            <person name="Ruan Y."/>
            <person name="Salzberg S.L."/>
            <person name="Sandelin A."/>
            <person name="Schneider C."/>
            <person name="Schoenbach C."/>
            <person name="Sekiguchi K."/>
            <person name="Semple C.A."/>
            <person name="Seno S."/>
            <person name="Sessa L."/>
            <person name="Sheng Y."/>
            <person name="Shibata Y."/>
            <person name="Shimada H."/>
            <person name="Shimada K."/>
            <person name="Silva D."/>
            <person name="Sinclair B."/>
            <person name="Sperling S."/>
            <person name="Stupka E."/>
            <person name="Sugiura K."/>
            <person name="Sultana R."/>
            <person name="Takenaka Y."/>
            <person name="Taki K."/>
            <person name="Tammoja K."/>
            <person name="Tan S.L."/>
            <person name="Tang S."/>
            <person name="Taylor M.S."/>
            <person name="Tegner J."/>
            <person name="Teichmann S.A."/>
            <person name="Ueda H.R."/>
            <person name="van Nimwegen E."/>
            <person name="Verardo R."/>
            <person name="Wei C.L."/>
            <person name="Yagi K."/>
            <person name="Yamanishi H."/>
            <person name="Zabarovsky E."/>
            <person name="Zhu S."/>
            <person name="Zimmer A."/>
            <person name="Hide W."/>
            <person name="Bult C."/>
            <person name="Grimmond S.M."/>
            <person name="Teasdale R.D."/>
            <person name="Liu E.T."/>
            <person name="Brusic V."/>
            <person name="Quackenbush J."/>
            <person name="Wahlestedt C."/>
            <person name="Mattick J.S."/>
            <person name="Hume D.A."/>
            <person name="Kai C."/>
            <person name="Sasaki D."/>
            <person name="Tomaru Y."/>
            <person name="Fukuda S."/>
            <person name="Kanamori-Katayama M."/>
            <person name="Suzuki M."/>
            <person name="Aoki J."/>
            <person name="Arakawa T."/>
            <person name="Iida J."/>
            <person name="Imamura K."/>
            <person name="Itoh M."/>
            <person name="Kato T."/>
            <person name="Kawaji H."/>
            <person name="Kawagashira N."/>
            <person name="Kawashima T."/>
            <person name="Kojima M."/>
            <person name="Kondo S."/>
            <person name="Konno H."/>
            <person name="Nakano K."/>
            <person name="Ninomiya N."/>
            <person name="Nishio T."/>
            <person name="Okada M."/>
            <person name="Plessy C."/>
            <person name="Shibata K."/>
            <person name="Shiraki T."/>
            <person name="Suzuki S."/>
            <person name="Tagami M."/>
            <person name="Waki K."/>
            <person name="Watahiki A."/>
            <person name="Okamura-Oho Y."/>
            <person name="Suzuki H."/>
            <person name="Kawai J."/>
            <person name="Hayashizaki Y."/>
        </authorList>
    </citation>
    <scope>NUCLEOTIDE SEQUENCE [LARGE SCALE MRNA]</scope>
    <source>
        <strain>NOD</strain>
        <tissue>Spleen</tissue>
    </source>
</reference>
<reference key="3">
    <citation type="journal article" date="2009" name="PLoS Biol.">
        <title>Lineage-specific biology revealed by a finished genome assembly of the mouse.</title>
        <authorList>
            <person name="Church D.M."/>
            <person name="Goodstadt L."/>
            <person name="Hillier L.W."/>
            <person name="Zody M.C."/>
            <person name="Goldstein S."/>
            <person name="She X."/>
            <person name="Bult C.J."/>
            <person name="Agarwala R."/>
            <person name="Cherry J.L."/>
            <person name="DiCuccio M."/>
            <person name="Hlavina W."/>
            <person name="Kapustin Y."/>
            <person name="Meric P."/>
            <person name="Maglott D."/>
            <person name="Birtle Z."/>
            <person name="Marques A.C."/>
            <person name="Graves T."/>
            <person name="Zhou S."/>
            <person name="Teague B."/>
            <person name="Potamousis K."/>
            <person name="Churas C."/>
            <person name="Place M."/>
            <person name="Herschleb J."/>
            <person name="Runnheim R."/>
            <person name="Forrest D."/>
            <person name="Amos-Landgraf J."/>
            <person name="Schwartz D.C."/>
            <person name="Cheng Z."/>
            <person name="Lindblad-Toh K."/>
            <person name="Eichler E.E."/>
            <person name="Ponting C.P."/>
        </authorList>
    </citation>
    <scope>NUCLEOTIDE SEQUENCE [LARGE SCALE GENOMIC DNA]</scope>
    <source>
        <strain>C57BL/6J</strain>
    </source>
</reference>
<reference key="4">
    <citation type="journal article" date="2004" name="Genome Res.">
        <title>The status, quality, and expansion of the NIH full-length cDNA project: the Mammalian Gene Collection (MGC).</title>
        <authorList>
            <consortium name="The MGC Project Team"/>
        </authorList>
    </citation>
    <scope>NUCLEOTIDE SEQUENCE [LARGE SCALE MRNA]</scope>
    <source>
        <strain>C57BL/6NCr</strain>
        <tissue>Brain</tissue>
        <tissue>Hematopoietic stem cell</tissue>
    </source>
</reference>
<reference key="5">
    <citation type="journal article" date="2002" name="Genes Dev.">
        <title>The zinc-finger proto-oncogene Gfi-1b is essential for development of the erythroid and megakaryocytic lineages.</title>
        <authorList>
            <person name="Saleque S."/>
            <person name="Cameron S."/>
            <person name="Orkin S.H."/>
        </authorList>
    </citation>
    <scope>DISRUPTION PHENOTYPE</scope>
</reference>
<reference key="6">
    <citation type="journal article" date="2002" name="J. Biol. Chem.">
        <title>Regulation of Socs gene expression by the proto-oncoprotein GFI-1B: two routes for STAT5 target gene induction by erythropoietin.</title>
        <authorList>
            <person name="Jegalian A.G."/>
            <person name="Wu H."/>
        </authorList>
    </citation>
    <scope>FUNCTION</scope>
    <scope>INDUCTION</scope>
</reference>
<reference key="7">
    <citation type="journal article" date="2002" name="Blood">
        <title>Erythroid expansion mediated by the Gfi-1B zinc finger protein: role in normal hematopoiesis.</title>
        <authorList>
            <person name="Osawa M."/>
            <person name="Yamaguchi T."/>
            <person name="Nakamura Y."/>
            <person name="Kaneko S."/>
            <person name="Onodera M."/>
            <person name="Sawada K."/>
            <person name="Jegalian A."/>
            <person name="Wu H."/>
            <person name="Nakauchi H."/>
            <person name="Iwama A."/>
        </authorList>
    </citation>
    <scope>FUNCTION</scope>
    <scope>DOMAIN</scope>
    <scope>TISSUE SPECIFICITY</scope>
</reference>
<reference key="8">
    <citation type="journal article" date="2003" name="J. Immunol.">
        <title>Growth factor independence-1B expression leads to defects in T cell activation, IL-7 receptor alpha expression, and T cell lineage commitment.</title>
        <authorList>
            <person name="Doan L.L."/>
            <person name="Kitay M.K."/>
            <person name="Yu Q."/>
            <person name="Singer A."/>
            <person name="Herblot S."/>
            <person name="Hoang T."/>
            <person name="Bear S.E."/>
            <person name="Morse H.C. III"/>
            <person name="Tsichlis P.N."/>
            <person name="Grimes H.L."/>
        </authorList>
    </citation>
    <scope>FUNCTION</scope>
    <scope>TRANSGENIC MICE</scope>
    <scope>TISSUE SPECIFICITY</scope>
    <scope>SUBCELLULAR LOCATION</scope>
</reference>
<reference key="9">
    <citation type="journal article" date="2005" name="EMBO J.">
        <title>GATA-1 forms distinct activating and repressive complexes in erythroid cells.</title>
        <authorList>
            <person name="Rodriguez P."/>
            <person name="Bonte E."/>
            <person name="Krijgsveld J."/>
            <person name="Kolodziej K.E."/>
            <person name="Guyot B."/>
            <person name="Heck A.J.R."/>
            <person name="Vyas P."/>
            <person name="de Boer E."/>
            <person name="Grosveld F."/>
            <person name="Strouboulis J."/>
        </authorList>
    </citation>
    <scope>INTERACTION WITH GATA1</scope>
</reference>
<reference key="10">
    <citation type="journal article" date="2005" name="Nucleic Acids Res.">
        <title>Direct transcriptional repression of the genes encoding the zinc-finger proteins Gfi1b and Gfi1 by Gfi1b.</title>
        <authorList>
            <person name="Vassen L."/>
            <person name="Fiolka K."/>
            <person name="Mahlmann S."/>
            <person name="Moeroey T."/>
        </authorList>
    </citation>
    <scope>FUNCTION</scope>
</reference>
<reference key="11">
    <citation type="journal article" date="2007" name="Blood">
        <title>Gfi1b:green fluorescent protein knock-in mice reveal a dynamic expression pattern of Gfi1b during hematopoiesis that is largely complementary to Gfi1.</title>
        <authorList>
            <person name="Vassen L."/>
            <person name="Okayama T."/>
            <person name="Moeroey T."/>
        </authorList>
    </citation>
    <scope>TRANSGENIC MICE</scope>
    <scope>TISSUE SPECIFICITY</scope>
</reference>
<reference key="12">
    <citation type="journal article" date="2007" name="Mol. Cell">
        <title>Epigenetic regulation of hematopoietic differentiation by Gfi-1 and Gfi-1b is mediated by the cofactors CoREST and LSD1.</title>
        <authorList>
            <person name="Saleque S."/>
            <person name="Kim J."/>
            <person name="Rooke H.M."/>
            <person name="Orkin S.H."/>
        </authorList>
    </citation>
    <scope>IDENTIFICATION BY MASS SPECTROMETRY AS A COMPONENT OF A GFI/RCOR/KDM1A/HDAC COMPLEX</scope>
    <scope>INTERACTION WITH RCOR1; HDAC1; HDAC2 AND KDM1A</scope>
    <scope>FUNCTION</scope>
    <scope>MUTAGENESIS OF PRO-2</scope>
</reference>
<reference key="13">
    <citation type="journal article" date="2010" name="Cell">
        <title>A tissue-specific atlas of mouse protein phosphorylation and expression.</title>
        <authorList>
            <person name="Huttlin E.L."/>
            <person name="Jedrychowski M.P."/>
            <person name="Elias J.E."/>
            <person name="Goswami T."/>
            <person name="Rad R."/>
            <person name="Beausoleil S.A."/>
            <person name="Villen J."/>
            <person name="Haas W."/>
            <person name="Sowa M.E."/>
            <person name="Gygi S.P."/>
        </authorList>
    </citation>
    <scope>IDENTIFICATION BY MASS SPECTROMETRY [LARGE SCALE ANALYSIS]</scope>
    <source>
        <tissue>Spleen</tissue>
    </source>
</reference>
<feature type="chain" id="PRO_0000306328" description="Zinc finger protein Gfi-1b">
    <location>
        <begin position="1"/>
        <end position="330"/>
    </location>
</feature>
<feature type="zinc finger region" description="C2H2-type 1" evidence="3">
    <location>
        <begin position="163"/>
        <end position="186"/>
    </location>
</feature>
<feature type="zinc finger region" description="C2H2-type 2" evidence="3">
    <location>
        <begin position="192"/>
        <end position="214"/>
    </location>
</feature>
<feature type="zinc finger region" description="C2H2-type 3" evidence="3">
    <location>
        <begin position="220"/>
        <end position="242"/>
    </location>
</feature>
<feature type="zinc finger region" description="C2H2-type 4" evidence="3">
    <location>
        <begin position="248"/>
        <end position="270"/>
    </location>
</feature>
<feature type="zinc finger region" description="C2H2-type 5" evidence="3">
    <location>
        <begin position="276"/>
        <end position="298"/>
    </location>
</feature>
<feature type="zinc finger region" description="C2H2-type 6" evidence="3">
    <location>
        <begin position="304"/>
        <end position="327"/>
    </location>
</feature>
<feature type="region of interest" description="Disordered" evidence="4">
    <location>
        <begin position="1"/>
        <end position="21"/>
    </location>
</feature>
<feature type="region of interest" description="SNAG domain">
    <location>
        <begin position="1"/>
        <end position="20"/>
    </location>
</feature>
<feature type="region of interest" description="Disordered" evidence="4">
    <location>
        <begin position="75"/>
        <end position="99"/>
    </location>
</feature>
<feature type="region of interest" description="Interaction with ARIH2" evidence="1">
    <location>
        <begin position="91"/>
        <end position="330"/>
    </location>
</feature>
<feature type="region of interest" description="Mediates interaction with GATA1" evidence="1">
    <location>
        <begin position="164"/>
        <end position="330"/>
    </location>
</feature>
<feature type="modified residue" description="N6,N6-dimethyllysine" evidence="2">
    <location>
        <position position="8"/>
    </location>
</feature>
<feature type="mutagenesis site" description="Abrogates interaction with NCOR1 and KDM1A. Greatly diminished interaction with HDAC2. Loss of ability to promote erythrocyte and granulocyte differentiation." evidence="12">
    <original>P</original>
    <variation>A</variation>
    <location>
        <position position="2"/>
    </location>
</feature>
<feature type="sequence conflict" description="In Ref. 2; BAE34016." evidence="14" ref="2">
    <original>E</original>
    <variation>G</variation>
    <location>
        <position position="37"/>
    </location>
</feature>
<name>GFI1B_MOUSE</name>
<accession>O70237</accession>
<accession>Q3U039</accession>
<proteinExistence type="evidence at protein level"/>
<keyword id="KW-0010">Activator</keyword>
<keyword id="KW-0217">Developmental protein</keyword>
<keyword id="KW-0238">DNA-binding</keyword>
<keyword id="KW-0479">Metal-binding</keyword>
<keyword id="KW-0488">Methylation</keyword>
<keyword id="KW-0539">Nucleus</keyword>
<keyword id="KW-1185">Reference proteome</keyword>
<keyword id="KW-0677">Repeat</keyword>
<keyword id="KW-0678">Repressor</keyword>
<keyword id="KW-0804">Transcription</keyword>
<keyword id="KW-0805">Transcription regulation</keyword>
<keyword id="KW-0862">Zinc</keyword>
<keyword id="KW-0863">Zinc-finger</keyword>
<evidence type="ECO:0000250" key="1"/>
<evidence type="ECO:0000250" key="2">
    <source>
        <dbReference type="UniProtKB" id="Q5VTD9"/>
    </source>
</evidence>
<evidence type="ECO:0000255" key="3">
    <source>
        <dbReference type="PROSITE-ProRule" id="PRU00042"/>
    </source>
</evidence>
<evidence type="ECO:0000256" key="4">
    <source>
        <dbReference type="SAM" id="MobiDB-lite"/>
    </source>
</evidence>
<evidence type="ECO:0000269" key="5">
    <source>
    </source>
</evidence>
<evidence type="ECO:0000269" key="6">
    <source>
    </source>
</evidence>
<evidence type="ECO:0000269" key="7">
    <source>
    </source>
</evidence>
<evidence type="ECO:0000269" key="8">
    <source>
    </source>
</evidence>
<evidence type="ECO:0000269" key="9">
    <source>
    </source>
</evidence>
<evidence type="ECO:0000269" key="10">
    <source>
    </source>
</evidence>
<evidence type="ECO:0000269" key="11">
    <source>
    </source>
</evidence>
<evidence type="ECO:0000269" key="12">
    <source>
    </source>
</evidence>
<evidence type="ECO:0000269" key="13">
    <source>
    </source>
</evidence>
<evidence type="ECO:0000305" key="14"/>
<comment type="function">
    <text evidence="5 7 8 9 12 13">Essential proto-oncogenic transcriptional regulator necessary for development and differentiation of erythroid and megakaryocytic lineages. Component of a RCOR-GFI-KDM1A-HDAC complex that suppresses, via histone deacetylase (HDAC) recruitment, a number of genes implicated in multilineage blood cell development and controls hematopoietic differentiation. Transcriptional repressor or activator depending on both promoter and cell type context; represses promoter activity of SOCS1 and SOCS3 and thus, may regulate cytokine signaling pathways. Cooperates with GATA1 to repress target gene transcription, such as the apoptosis regulator BCL2L1; GFI1B silencing in leukemic cell lines markedly increase apoptosis rate. Inhibits down-regulation of MYC and MYB as well as the cyclin-dependent kinase inhibitor CDKN1A/P21WAF1 in IL6-treated myelomonocytic cells. Represses expression of GATA3 in T-cell lymphomas and inhibits GATA1-mediated transcription; as GATA1 also mediates erythroid GFI1B transcription, both GATA1 and GFI1B participate in a feedback regulatory pathway controlling the expression of GFI1B gene in erythroid cells. Suppresses GATA1-mediated stimulation of GFI1B promoter through protein interaction. Binds to gamma-satellite DNA and to its own promoter, auto-repressing its own expression. Alters histone methylation by recruiting histone methyltransferase to target genes promoters. Plays a role in heterochromatin formation.</text>
</comment>
<comment type="subunit">
    <text evidence="1 10 12">Interacts with histone methyltransferases EHMT2 and SUV39H1. Interacts with ARIH2 (via RING-type 2) and with RUNX1T1 (By similarity). Forms a complex with GATA1. Component of a RCOR-GFI-KDM1A-HDAC complex. Interacts directly with RCOR1, KDM1A and HDAC2.</text>
</comment>
<comment type="interaction">
    <interactant intactId="EBI-4287943">
        <id>O70237</id>
    </interactant>
    <interactant intactId="EBI-444966">
        <id>Q9Z148</id>
        <label>Ehmt2</label>
    </interactant>
    <organismsDiffer>false</organismsDiffer>
    <experiments>2</experiments>
</comment>
<comment type="interaction">
    <interactant intactId="EBI-4287943">
        <id>O70237</id>
    </interactant>
    <interactant intactId="EBI-302230">
        <id>O54864</id>
        <label>Suv39h1</label>
    </interactant>
    <organismsDiffer>false</organismsDiffer>
    <experiments>2</experiments>
</comment>
<comment type="subcellular location">
    <subcellularLocation>
        <location evidence="8">Nucleus</location>
    </subcellularLocation>
    <text>Localized at foci of pericentric heterochromatin.</text>
</comment>
<comment type="tissue specificity">
    <text evidence="7 8 11 13">Expressed in bone marrow and in spleen. Detected in hematopoietic stem cells, erythroblasts, and megakaryocytes. Expressed in thymocytes.</text>
</comment>
<comment type="induction">
    <text evidence="5">Down-regulated by IL6 treatment in myelomonocytic cells, and in response to EPO in myeloid cells; EPO-induced down-regulation of Gfi1b is STAT5-dependent.</text>
</comment>
<comment type="domain">
    <text evidence="7">The zinc finger domain is essential for erythroid expansion and acts as an activation domain whereas non finger domain serves as repression domain.</text>
</comment>
<comment type="domain">
    <text evidence="1">The SNAG domain of GFIs is required for nuclear location and for interaction with some corepressors.</text>
</comment>
<comment type="PTM">
    <text evidence="1">Methylation at Lys-8 in the SNAG domain seems required for the recruitment of the corepressor complex.</text>
</comment>
<comment type="disruption phenotype">
    <text evidence="6">Mice are not viable and embryos die by 15 dpc during the transition from primitive to definitive hematopoiesis. They exhibit delayed maturation of primitive erythrocytes and subsequently die with failure to produce enucleated erythrocytes. Their fetal liver contains erythroid and megakaryocytic precursor arrested in their development.</text>
</comment>
<comment type="miscellaneous">
    <text>Transgenic mice with insertion of green fluorescence protein (GFP) cDNA in Gfi1b gene allowed to show up-regulation of Gfi1b in early stage of B-cell and in a subset of early thymic pre-T-cell. Mice overexpressing Gfi1b display peripheral T-lymphopenia and a profound defect in activation after CD3 cross-linking. Spleen cells show reduction in the numbers of CD4 and CD8 T-cells. Thymocyte lineage commitment and maturation are altered.</text>
</comment>
<gene>
    <name type="primary">Gfi1b</name>
</gene>